<sequence length="396" mass="44217">MTVSEGIARIQAFRKQVPLVEKNENITFFNLSFQPPMNSIVANTINEYVDWGLYNPNPKPLWQQKAEETRELVAKYLNASSSDSIAFTRDTTEGLNLFQRSMHFQPGDNVVLLDGEHPNHGFGWISLQEAGLEVRLIPSKDIYYADASTFEPYVDEKTKAIGISSVMFHSGQLNNVKDICNKFRPENIHVLVDMTQQVGLSSIDVQELNVSACAFACHKGLSCPTGLGVLYVAPDVLPQLKNVPPIVGAGAIENLDANLLVNLNPIYFSTARRFEHLNKSLITTLCLNNYLSFLMDIGFENIEQYLRELGKSLVDELSKLGVTIIGSKDPKKRSTHSYVAKILNPEWDAFLKNEGVYASQYRDGIRLSLGLYNNAADISRLANTIKKGVLNKIPFN</sequence>
<evidence type="ECO:0000250" key="1"/>
<evidence type="ECO:0000269" key="2">
    <source>
    </source>
</evidence>
<evidence type="ECO:0000305" key="3"/>
<dbReference type="EC" id="2.6.-.-"/>
<dbReference type="EMBL" id="CU329672">
    <property type="protein sequence ID" value="CAA20707.1"/>
    <property type="molecule type" value="Genomic_DNA"/>
</dbReference>
<dbReference type="PIR" id="T11709">
    <property type="entry name" value="T11709"/>
</dbReference>
<dbReference type="RefSeq" id="NP_588249.1">
    <property type="nucleotide sequence ID" value="NM_001023239.2"/>
</dbReference>
<dbReference type="SMR" id="O74542"/>
<dbReference type="BioGRID" id="275278">
    <property type="interactions" value="1"/>
</dbReference>
<dbReference type="FunCoup" id="O74542">
    <property type="interactions" value="1"/>
</dbReference>
<dbReference type="STRING" id="284812.O74542"/>
<dbReference type="PaxDb" id="4896-SPCC777.03c.1"/>
<dbReference type="EnsemblFungi" id="SPCC777.03c.1">
    <property type="protein sequence ID" value="SPCC777.03c.1:pep"/>
    <property type="gene ID" value="SPCC777.03c"/>
</dbReference>
<dbReference type="KEGG" id="spo:2538693"/>
<dbReference type="PomBase" id="SPCC777.03c"/>
<dbReference type="VEuPathDB" id="FungiDB:SPCC777.03c"/>
<dbReference type="eggNOG" id="KOG1549">
    <property type="taxonomic scope" value="Eukaryota"/>
</dbReference>
<dbReference type="HOGENOM" id="CLU_003433_2_1_1"/>
<dbReference type="InParanoid" id="O74542"/>
<dbReference type="OMA" id="NHAYGWL"/>
<dbReference type="PhylomeDB" id="O74542"/>
<dbReference type="PRO" id="PR:O74542"/>
<dbReference type="Proteomes" id="UP000002485">
    <property type="component" value="Chromosome III"/>
</dbReference>
<dbReference type="GO" id="GO:0005829">
    <property type="term" value="C:cytosol"/>
    <property type="evidence" value="ECO:0007005"/>
    <property type="project" value="PomBase"/>
</dbReference>
<dbReference type="GO" id="GO:0005634">
    <property type="term" value="C:nucleus"/>
    <property type="evidence" value="ECO:0007005"/>
    <property type="project" value="PomBase"/>
</dbReference>
<dbReference type="GO" id="GO:0031071">
    <property type="term" value="F:cysteine desulfurase activity"/>
    <property type="evidence" value="ECO:0000250"/>
    <property type="project" value="PomBase"/>
</dbReference>
<dbReference type="GO" id="GO:0008483">
    <property type="term" value="F:transaminase activity"/>
    <property type="evidence" value="ECO:0007669"/>
    <property type="project" value="UniProtKB-KW"/>
</dbReference>
<dbReference type="FunFam" id="3.40.640.10:FF:000296">
    <property type="entry name" value="Hercynylcysteine sulfoxide lyase"/>
    <property type="match status" value="1"/>
</dbReference>
<dbReference type="Gene3D" id="3.90.1150.10">
    <property type="entry name" value="Aspartate Aminotransferase, domain 1"/>
    <property type="match status" value="1"/>
</dbReference>
<dbReference type="Gene3D" id="3.40.640.10">
    <property type="entry name" value="Type I PLP-dependent aspartate aminotransferase-like (Major domain)"/>
    <property type="match status" value="1"/>
</dbReference>
<dbReference type="InterPro" id="IPR000192">
    <property type="entry name" value="Aminotrans_V_dom"/>
</dbReference>
<dbReference type="InterPro" id="IPR015424">
    <property type="entry name" value="PyrdxlP-dep_Trfase"/>
</dbReference>
<dbReference type="InterPro" id="IPR015421">
    <property type="entry name" value="PyrdxlP-dep_Trfase_major"/>
</dbReference>
<dbReference type="InterPro" id="IPR015422">
    <property type="entry name" value="PyrdxlP-dep_Trfase_small"/>
</dbReference>
<dbReference type="PANTHER" id="PTHR43586">
    <property type="entry name" value="CYSTEINE DESULFURASE"/>
    <property type="match status" value="1"/>
</dbReference>
<dbReference type="PANTHER" id="PTHR43586:SF8">
    <property type="entry name" value="CYSTEINE DESULFURASE 1, CHLOROPLASTIC"/>
    <property type="match status" value="1"/>
</dbReference>
<dbReference type="Pfam" id="PF00266">
    <property type="entry name" value="Aminotran_5"/>
    <property type="match status" value="1"/>
</dbReference>
<dbReference type="SUPFAM" id="SSF53383">
    <property type="entry name" value="PLP-dependent transferases"/>
    <property type="match status" value="1"/>
</dbReference>
<accession>O74542</accession>
<organism>
    <name type="scientific">Schizosaccharomyces pombe (strain 972 / ATCC 24843)</name>
    <name type="common">Fission yeast</name>
    <dbReference type="NCBI Taxonomy" id="284812"/>
    <lineage>
        <taxon>Eukaryota</taxon>
        <taxon>Fungi</taxon>
        <taxon>Dikarya</taxon>
        <taxon>Ascomycota</taxon>
        <taxon>Taphrinomycotina</taxon>
        <taxon>Schizosaccharomycetes</taxon>
        <taxon>Schizosaccharomycetales</taxon>
        <taxon>Schizosaccharomycetaceae</taxon>
        <taxon>Schizosaccharomyces</taxon>
    </lineage>
</organism>
<keyword id="KW-0032">Aminotransferase</keyword>
<keyword id="KW-0963">Cytoplasm</keyword>
<keyword id="KW-0539">Nucleus</keyword>
<keyword id="KW-0663">Pyridoxal phosphate</keyword>
<keyword id="KW-1185">Reference proteome</keyword>
<keyword id="KW-0808">Transferase</keyword>
<reference key="1">
    <citation type="journal article" date="2002" name="Nature">
        <title>The genome sequence of Schizosaccharomyces pombe.</title>
        <authorList>
            <person name="Wood V."/>
            <person name="Gwilliam R."/>
            <person name="Rajandream M.A."/>
            <person name="Lyne M.H."/>
            <person name="Lyne R."/>
            <person name="Stewart A."/>
            <person name="Sgouros J.G."/>
            <person name="Peat N."/>
            <person name="Hayles J."/>
            <person name="Baker S.G."/>
            <person name="Basham D."/>
            <person name="Bowman S."/>
            <person name="Brooks K."/>
            <person name="Brown D."/>
            <person name="Brown S."/>
            <person name="Chillingworth T."/>
            <person name="Churcher C.M."/>
            <person name="Collins M."/>
            <person name="Connor R."/>
            <person name="Cronin A."/>
            <person name="Davis P."/>
            <person name="Feltwell T."/>
            <person name="Fraser A."/>
            <person name="Gentles S."/>
            <person name="Goble A."/>
            <person name="Hamlin N."/>
            <person name="Harris D.E."/>
            <person name="Hidalgo J."/>
            <person name="Hodgson G."/>
            <person name="Holroyd S."/>
            <person name="Hornsby T."/>
            <person name="Howarth S."/>
            <person name="Huckle E.J."/>
            <person name="Hunt S."/>
            <person name="Jagels K."/>
            <person name="James K.D."/>
            <person name="Jones L."/>
            <person name="Jones M."/>
            <person name="Leather S."/>
            <person name="McDonald S."/>
            <person name="McLean J."/>
            <person name="Mooney P."/>
            <person name="Moule S."/>
            <person name="Mungall K.L."/>
            <person name="Murphy L.D."/>
            <person name="Niblett D."/>
            <person name="Odell C."/>
            <person name="Oliver K."/>
            <person name="O'Neil S."/>
            <person name="Pearson D."/>
            <person name="Quail M.A."/>
            <person name="Rabbinowitsch E."/>
            <person name="Rutherford K.M."/>
            <person name="Rutter S."/>
            <person name="Saunders D."/>
            <person name="Seeger K."/>
            <person name="Sharp S."/>
            <person name="Skelton J."/>
            <person name="Simmonds M.N."/>
            <person name="Squares R."/>
            <person name="Squares S."/>
            <person name="Stevens K."/>
            <person name="Taylor K."/>
            <person name="Taylor R.G."/>
            <person name="Tivey A."/>
            <person name="Walsh S.V."/>
            <person name="Warren T."/>
            <person name="Whitehead S."/>
            <person name="Woodward J.R."/>
            <person name="Volckaert G."/>
            <person name="Aert R."/>
            <person name="Robben J."/>
            <person name="Grymonprez B."/>
            <person name="Weltjens I."/>
            <person name="Vanstreels E."/>
            <person name="Rieger M."/>
            <person name="Schaefer M."/>
            <person name="Mueller-Auer S."/>
            <person name="Gabel C."/>
            <person name="Fuchs M."/>
            <person name="Duesterhoeft A."/>
            <person name="Fritzc C."/>
            <person name="Holzer E."/>
            <person name="Moestl D."/>
            <person name="Hilbert H."/>
            <person name="Borzym K."/>
            <person name="Langer I."/>
            <person name="Beck A."/>
            <person name="Lehrach H."/>
            <person name="Reinhardt R."/>
            <person name="Pohl T.M."/>
            <person name="Eger P."/>
            <person name="Zimmermann W."/>
            <person name="Wedler H."/>
            <person name="Wambutt R."/>
            <person name="Purnelle B."/>
            <person name="Goffeau A."/>
            <person name="Cadieu E."/>
            <person name="Dreano S."/>
            <person name="Gloux S."/>
            <person name="Lelaure V."/>
            <person name="Mottier S."/>
            <person name="Galibert F."/>
            <person name="Aves S.J."/>
            <person name="Xiang Z."/>
            <person name="Hunt C."/>
            <person name="Moore K."/>
            <person name="Hurst S.M."/>
            <person name="Lucas M."/>
            <person name="Rochet M."/>
            <person name="Gaillardin C."/>
            <person name="Tallada V.A."/>
            <person name="Garzon A."/>
            <person name="Thode G."/>
            <person name="Daga R.R."/>
            <person name="Cruzado L."/>
            <person name="Jimenez J."/>
            <person name="Sanchez M."/>
            <person name="del Rey F."/>
            <person name="Benito J."/>
            <person name="Dominguez A."/>
            <person name="Revuelta J.L."/>
            <person name="Moreno S."/>
            <person name="Armstrong J."/>
            <person name="Forsburg S.L."/>
            <person name="Cerutti L."/>
            <person name="Lowe T."/>
            <person name="McCombie W.R."/>
            <person name="Paulsen I."/>
            <person name="Potashkin J."/>
            <person name="Shpakovski G.V."/>
            <person name="Ussery D."/>
            <person name="Barrell B.G."/>
            <person name="Nurse P."/>
        </authorList>
    </citation>
    <scope>NUCLEOTIDE SEQUENCE [LARGE SCALE GENOMIC DNA]</scope>
    <source>
        <strain>972 / ATCC 24843</strain>
    </source>
</reference>
<reference key="2">
    <citation type="journal article" date="2006" name="Nat. Biotechnol.">
        <title>ORFeome cloning and global analysis of protein localization in the fission yeast Schizosaccharomyces pombe.</title>
        <authorList>
            <person name="Matsuyama A."/>
            <person name="Arai R."/>
            <person name="Yashiroda Y."/>
            <person name="Shirai A."/>
            <person name="Kamata A."/>
            <person name="Sekido S."/>
            <person name="Kobayashi Y."/>
            <person name="Hashimoto A."/>
            <person name="Hamamoto M."/>
            <person name="Hiraoka Y."/>
            <person name="Horinouchi S."/>
            <person name="Yoshida M."/>
        </authorList>
    </citation>
    <scope>SUBCELLULAR LOCATION [LARGE SCALE ANALYSIS]</scope>
</reference>
<gene>
    <name type="ORF">SPCC777.03c</name>
</gene>
<proteinExistence type="inferred from homology"/>
<feature type="chain" id="PRO_0000310317" description="Uncharacterized aminotransferase C777.03c">
    <location>
        <begin position="1"/>
        <end position="396"/>
    </location>
</feature>
<feature type="modified residue" description="N6-(pyridoxal phosphate)lysine" evidence="1">
    <location>
        <position position="219"/>
    </location>
</feature>
<protein>
    <recommendedName>
        <fullName>Uncharacterized aminotransferase C777.03c</fullName>
        <ecNumber>2.6.-.-</ecNumber>
    </recommendedName>
</protein>
<comment type="cofactor">
    <cofactor evidence="1">
        <name>pyridoxal 5'-phosphate</name>
        <dbReference type="ChEBI" id="CHEBI:597326"/>
    </cofactor>
</comment>
<comment type="subcellular location">
    <subcellularLocation>
        <location evidence="2">Cytoplasm</location>
    </subcellularLocation>
    <subcellularLocation>
        <location evidence="2">Nucleus</location>
    </subcellularLocation>
</comment>
<comment type="similarity">
    <text evidence="3">Belongs to the class-V pyridoxal-phosphate-dependent aminotransferase family.</text>
</comment>
<name>YCV3_SCHPO</name>